<protein>
    <recommendedName>
        <fullName>Cytochrome b</fullName>
    </recommendedName>
    <alternativeName>
        <fullName>Complex III subunit 3</fullName>
    </alternativeName>
    <alternativeName>
        <fullName>Complex III subunit III</fullName>
    </alternativeName>
    <alternativeName>
        <fullName>Cytochrome b-c1 complex subunit 3</fullName>
    </alternativeName>
    <alternativeName>
        <fullName>Ubiquinol-cytochrome-c reductase complex cytochrome b subunit</fullName>
    </alternativeName>
</protein>
<keyword id="KW-0249">Electron transport</keyword>
<keyword id="KW-0349">Heme</keyword>
<keyword id="KW-0408">Iron</keyword>
<keyword id="KW-0472">Membrane</keyword>
<keyword id="KW-0479">Metal-binding</keyword>
<keyword id="KW-0496">Mitochondrion</keyword>
<keyword id="KW-0999">Mitochondrion inner membrane</keyword>
<keyword id="KW-0679">Respiratory chain</keyword>
<keyword id="KW-0812">Transmembrane</keyword>
<keyword id="KW-1133">Transmembrane helix</keyword>
<keyword id="KW-0813">Transport</keyword>
<keyword id="KW-0830">Ubiquinone</keyword>
<reference key="1">
    <citation type="journal article" date="2001" name="Curr. Biol.">
        <title>Ancient DNA analysis reveals divergence of the cave bear, Ursus spelaeus, and brown bear, Ursus arctos, lineages.</title>
        <authorList>
            <person name="Loreille O."/>
            <person name="Orlando L."/>
            <person name="Patou-Mathis M."/>
            <person name="Philippe M."/>
            <person name="Taberlet P."/>
            <person name="Hanni C."/>
        </authorList>
    </citation>
    <scope>NUCLEOTIDE SEQUENCE [GENOMIC DNA]</scope>
    <source>
        <tissue>Bone</tissue>
    </source>
</reference>
<organism>
    <name type="scientific">Ursus spelaeus</name>
    <name type="common">Cave bear</name>
    <dbReference type="NCBI Taxonomy" id="39097"/>
    <lineage>
        <taxon>Eukaryota</taxon>
        <taxon>Metazoa</taxon>
        <taxon>Chordata</taxon>
        <taxon>Craniata</taxon>
        <taxon>Vertebrata</taxon>
        <taxon>Euteleostomi</taxon>
        <taxon>Mammalia</taxon>
        <taxon>Eutheria</taxon>
        <taxon>Laurasiatheria</taxon>
        <taxon>Carnivora</taxon>
        <taxon>Caniformia</taxon>
        <taxon>Ursidae</taxon>
        <taxon>Ursus</taxon>
    </lineage>
</organism>
<comment type="function">
    <text evidence="2">Component of the ubiquinol-cytochrome c reductase complex (complex III or cytochrome b-c1 complex) that is part of the mitochondrial respiratory chain. The b-c1 complex mediates electron transfer from ubiquinol to cytochrome c. Contributes to the generation of a proton gradient across the mitochondrial membrane that is then used for ATP synthesis.</text>
</comment>
<comment type="cofactor">
    <cofactor evidence="2">
        <name>heme b</name>
        <dbReference type="ChEBI" id="CHEBI:60344"/>
    </cofactor>
    <text evidence="2">Binds 2 heme b groups non-covalently.</text>
</comment>
<comment type="subunit">
    <text evidence="2">The cytochrome bc1 complex contains 11 subunits: 3 respiratory subunits (MT-CYB, CYC1 and UQCRFS1), 2 core proteins (UQCRC1 and UQCRC2) and 6 low-molecular weight proteins (UQCRH/QCR6, UQCRB/QCR7, UQCRQ/QCR8, UQCR10/QCR9, UQCR11/QCR10 and a cleavage product of UQCRFS1). This cytochrome bc1 complex then forms a dimer.</text>
</comment>
<comment type="subcellular location">
    <subcellularLocation>
        <location evidence="2">Mitochondrion inner membrane</location>
        <topology evidence="2">Multi-pass membrane protein</topology>
    </subcellularLocation>
</comment>
<comment type="miscellaneous">
    <text evidence="1">Heme 1 (or BL or b562) is low-potential and absorbs at about 562 nm, and heme 2 (or BH or b566) is high-potential and absorbs at about 566 nm.</text>
</comment>
<comment type="similarity">
    <text evidence="3 4">Belongs to the cytochrome b family.</text>
</comment>
<comment type="caution">
    <text evidence="2">The full-length protein contains only eight transmembrane helices, not nine as predicted by bioinformatics tools.</text>
</comment>
<feature type="chain" id="PRO_0000061705" description="Cytochrome b">
    <location>
        <begin position="1"/>
        <end position="379"/>
    </location>
</feature>
<feature type="transmembrane region" description="Helical" evidence="2">
    <location>
        <begin position="33"/>
        <end position="53"/>
    </location>
</feature>
<feature type="transmembrane region" description="Helical" evidence="2">
    <location>
        <begin position="77"/>
        <end position="98"/>
    </location>
</feature>
<feature type="transmembrane region" description="Helical" evidence="2">
    <location>
        <begin position="113"/>
        <end position="133"/>
    </location>
</feature>
<feature type="transmembrane region" description="Helical" evidence="2">
    <location>
        <begin position="178"/>
        <end position="198"/>
    </location>
</feature>
<feature type="transmembrane region" description="Helical" evidence="2">
    <location>
        <begin position="226"/>
        <end position="246"/>
    </location>
</feature>
<feature type="transmembrane region" description="Helical" evidence="2">
    <location>
        <begin position="288"/>
        <end position="308"/>
    </location>
</feature>
<feature type="transmembrane region" description="Helical" evidence="2">
    <location>
        <begin position="320"/>
        <end position="340"/>
    </location>
</feature>
<feature type="transmembrane region" description="Helical" evidence="2">
    <location>
        <begin position="347"/>
        <end position="367"/>
    </location>
</feature>
<feature type="binding site" description="axial binding residue" evidence="2">
    <location>
        <position position="83"/>
    </location>
    <ligand>
        <name>heme b</name>
        <dbReference type="ChEBI" id="CHEBI:60344"/>
        <label>b562</label>
    </ligand>
    <ligandPart>
        <name>Fe</name>
        <dbReference type="ChEBI" id="CHEBI:18248"/>
    </ligandPart>
</feature>
<feature type="binding site" description="axial binding residue" evidence="2">
    <location>
        <position position="97"/>
    </location>
    <ligand>
        <name>heme b</name>
        <dbReference type="ChEBI" id="CHEBI:60344"/>
        <label>b566</label>
    </ligand>
    <ligandPart>
        <name>Fe</name>
        <dbReference type="ChEBI" id="CHEBI:18248"/>
    </ligandPart>
</feature>
<feature type="binding site" description="axial binding residue" evidence="2">
    <location>
        <position position="182"/>
    </location>
    <ligand>
        <name>heme b</name>
        <dbReference type="ChEBI" id="CHEBI:60344"/>
        <label>b562</label>
    </ligand>
    <ligandPart>
        <name>Fe</name>
        <dbReference type="ChEBI" id="CHEBI:18248"/>
    </ligandPart>
</feature>
<feature type="binding site" description="axial binding residue" evidence="2">
    <location>
        <position position="196"/>
    </location>
    <ligand>
        <name>heme b</name>
        <dbReference type="ChEBI" id="CHEBI:60344"/>
        <label>b566</label>
    </ligand>
    <ligandPart>
        <name>Fe</name>
        <dbReference type="ChEBI" id="CHEBI:18248"/>
    </ligandPart>
</feature>
<feature type="binding site" evidence="2">
    <location>
        <position position="201"/>
    </location>
    <ligand>
        <name>a ubiquinone</name>
        <dbReference type="ChEBI" id="CHEBI:16389"/>
    </ligand>
</feature>
<gene>
    <name type="primary">MT-CYB</name>
    <name type="synonym">COB</name>
    <name type="synonym">CYTB</name>
    <name type="synonym">MTCYB</name>
</gene>
<evidence type="ECO:0000250" key="1"/>
<evidence type="ECO:0000250" key="2">
    <source>
        <dbReference type="UniProtKB" id="P00157"/>
    </source>
</evidence>
<evidence type="ECO:0000255" key="3">
    <source>
        <dbReference type="PROSITE-ProRule" id="PRU00967"/>
    </source>
</evidence>
<evidence type="ECO:0000255" key="4">
    <source>
        <dbReference type="PROSITE-ProRule" id="PRU00968"/>
    </source>
</evidence>
<geneLocation type="mitochondrion"/>
<sequence>MTNIRKTHPLAKIINNSFIDLPTPSNISAWWNFGSLLGVCLILQILTGLFLAMHYTSDTTTAFSSITHICRDVHYGWVIRYMHANGASMFFICLFMHVGRGLYYGSYLFSETWNIGIILLLTVMATAFMGYVLPWGQMSFWGATVITNLLSAIPYIGTDLVEWIWGGFSVDKATLTRFFAFHFILPFIILALAAVHLLFLHETGSNNPSGIPSDSDKIPFHPYYTIKDILGALLLTLALAALVLFSPDLLGDPDNYTPANPLSTPPHIKPEWYFLFAYAILRFIPNKLGGVLALIFSILILAIISLLHTSKQRGMMFRPLSQCLFWLLVADLLTLTWIGGQPVEHPFIIIGQLASILYFTIPLVLMPIAGIIENNLLKW</sequence>
<accession>Q9MFN3</accession>
<name>CYB_URSSP</name>
<dbReference type="EMBL" id="AF264047">
    <property type="protein sequence ID" value="AAF74499.1"/>
    <property type="molecule type" value="Genomic_DNA"/>
</dbReference>
<dbReference type="SMR" id="Q9MFN3"/>
<dbReference type="GO" id="GO:0005743">
    <property type="term" value="C:mitochondrial inner membrane"/>
    <property type="evidence" value="ECO:0007669"/>
    <property type="project" value="UniProtKB-SubCell"/>
</dbReference>
<dbReference type="GO" id="GO:0045275">
    <property type="term" value="C:respiratory chain complex III"/>
    <property type="evidence" value="ECO:0007669"/>
    <property type="project" value="InterPro"/>
</dbReference>
<dbReference type="GO" id="GO:0046872">
    <property type="term" value="F:metal ion binding"/>
    <property type="evidence" value="ECO:0007669"/>
    <property type="project" value="UniProtKB-KW"/>
</dbReference>
<dbReference type="GO" id="GO:0008121">
    <property type="term" value="F:ubiquinol-cytochrome-c reductase activity"/>
    <property type="evidence" value="ECO:0007669"/>
    <property type="project" value="InterPro"/>
</dbReference>
<dbReference type="GO" id="GO:0006122">
    <property type="term" value="P:mitochondrial electron transport, ubiquinol to cytochrome c"/>
    <property type="evidence" value="ECO:0007669"/>
    <property type="project" value="TreeGrafter"/>
</dbReference>
<dbReference type="CDD" id="cd00290">
    <property type="entry name" value="cytochrome_b_C"/>
    <property type="match status" value="1"/>
</dbReference>
<dbReference type="CDD" id="cd00284">
    <property type="entry name" value="Cytochrome_b_N"/>
    <property type="match status" value="1"/>
</dbReference>
<dbReference type="FunFam" id="1.20.810.10:FF:000002">
    <property type="entry name" value="Cytochrome b"/>
    <property type="match status" value="1"/>
</dbReference>
<dbReference type="Gene3D" id="1.20.810.10">
    <property type="entry name" value="Cytochrome Bc1 Complex, Chain C"/>
    <property type="match status" value="1"/>
</dbReference>
<dbReference type="InterPro" id="IPR005798">
    <property type="entry name" value="Cyt_b/b6_C"/>
</dbReference>
<dbReference type="InterPro" id="IPR036150">
    <property type="entry name" value="Cyt_b/b6_C_sf"/>
</dbReference>
<dbReference type="InterPro" id="IPR005797">
    <property type="entry name" value="Cyt_b/b6_N"/>
</dbReference>
<dbReference type="InterPro" id="IPR027387">
    <property type="entry name" value="Cytb/b6-like_sf"/>
</dbReference>
<dbReference type="InterPro" id="IPR030689">
    <property type="entry name" value="Cytochrome_b"/>
</dbReference>
<dbReference type="InterPro" id="IPR048260">
    <property type="entry name" value="Cytochrome_b_C_euk/bac"/>
</dbReference>
<dbReference type="InterPro" id="IPR048259">
    <property type="entry name" value="Cytochrome_b_N_euk/bac"/>
</dbReference>
<dbReference type="InterPro" id="IPR016174">
    <property type="entry name" value="Di-haem_cyt_TM"/>
</dbReference>
<dbReference type="PANTHER" id="PTHR19271">
    <property type="entry name" value="CYTOCHROME B"/>
    <property type="match status" value="1"/>
</dbReference>
<dbReference type="PANTHER" id="PTHR19271:SF16">
    <property type="entry name" value="CYTOCHROME B"/>
    <property type="match status" value="1"/>
</dbReference>
<dbReference type="Pfam" id="PF00032">
    <property type="entry name" value="Cytochrom_B_C"/>
    <property type="match status" value="1"/>
</dbReference>
<dbReference type="Pfam" id="PF00033">
    <property type="entry name" value="Cytochrome_B"/>
    <property type="match status" value="1"/>
</dbReference>
<dbReference type="PIRSF" id="PIRSF038885">
    <property type="entry name" value="COB"/>
    <property type="match status" value="1"/>
</dbReference>
<dbReference type="SUPFAM" id="SSF81648">
    <property type="entry name" value="a domain/subunit of cytochrome bc1 complex (Ubiquinol-cytochrome c reductase)"/>
    <property type="match status" value="1"/>
</dbReference>
<dbReference type="SUPFAM" id="SSF81342">
    <property type="entry name" value="Transmembrane di-heme cytochromes"/>
    <property type="match status" value="1"/>
</dbReference>
<dbReference type="PROSITE" id="PS51003">
    <property type="entry name" value="CYTB_CTER"/>
    <property type="match status" value="1"/>
</dbReference>
<dbReference type="PROSITE" id="PS51002">
    <property type="entry name" value="CYTB_NTER"/>
    <property type="match status" value="1"/>
</dbReference>
<proteinExistence type="inferred from homology"/>